<evidence type="ECO:0000255" key="1">
    <source>
        <dbReference type="HAMAP-Rule" id="MF_01347"/>
    </source>
</evidence>
<comment type="function">
    <text evidence="1">Produces ATP from ADP in the presence of a proton gradient across the membrane. The catalytic sites are hosted primarily by the beta subunits.</text>
</comment>
<comment type="catalytic activity">
    <reaction evidence="1">
        <text>ATP + H2O + 4 H(+)(in) = ADP + phosphate + 5 H(+)(out)</text>
        <dbReference type="Rhea" id="RHEA:57720"/>
        <dbReference type="ChEBI" id="CHEBI:15377"/>
        <dbReference type="ChEBI" id="CHEBI:15378"/>
        <dbReference type="ChEBI" id="CHEBI:30616"/>
        <dbReference type="ChEBI" id="CHEBI:43474"/>
        <dbReference type="ChEBI" id="CHEBI:456216"/>
        <dbReference type="EC" id="7.1.2.2"/>
    </reaction>
</comment>
<comment type="subunit">
    <text evidence="1">F-type ATPases have 2 components, CF(1) - the catalytic core - and CF(0) - the membrane proton channel. CF(1) has five subunits: alpha(3), beta(3), gamma(1), delta(1), epsilon(1). CF(0) has three main subunits: a(1), b(2) and c(9-12). The alpha and beta chains form an alternating ring which encloses part of the gamma chain. CF(1) is attached to CF(0) by a central stalk formed by the gamma and epsilon chains, while a peripheral stalk is formed by the delta and b chains.</text>
</comment>
<comment type="subcellular location">
    <subcellularLocation>
        <location evidence="1">Cell membrane</location>
        <topology evidence="1">Peripheral membrane protein</topology>
    </subcellularLocation>
</comment>
<comment type="similarity">
    <text evidence="1">Belongs to the ATPase alpha/beta chains family.</text>
</comment>
<keyword id="KW-0066">ATP synthesis</keyword>
<keyword id="KW-0067">ATP-binding</keyword>
<keyword id="KW-1003">Cell membrane</keyword>
<keyword id="KW-0139">CF(1)</keyword>
<keyword id="KW-0375">Hydrogen ion transport</keyword>
<keyword id="KW-0406">Ion transport</keyword>
<keyword id="KW-0472">Membrane</keyword>
<keyword id="KW-0547">Nucleotide-binding</keyword>
<keyword id="KW-1278">Translocase</keyword>
<keyword id="KW-0813">Transport</keyword>
<accession>C1CSC8</accession>
<dbReference type="EC" id="7.1.2.2" evidence="1"/>
<dbReference type="EMBL" id="CP000921">
    <property type="protein sequence ID" value="ACO23368.1"/>
    <property type="molecule type" value="Genomic_DNA"/>
</dbReference>
<dbReference type="RefSeq" id="WP_000094364.1">
    <property type="nucleotide sequence ID" value="NC_012469.1"/>
</dbReference>
<dbReference type="SMR" id="C1CSC8"/>
<dbReference type="KEGG" id="snt:SPT_1444"/>
<dbReference type="HOGENOM" id="CLU_022398_0_2_9"/>
<dbReference type="GO" id="GO:0005886">
    <property type="term" value="C:plasma membrane"/>
    <property type="evidence" value="ECO:0007669"/>
    <property type="project" value="UniProtKB-SubCell"/>
</dbReference>
<dbReference type="GO" id="GO:0045259">
    <property type="term" value="C:proton-transporting ATP synthase complex"/>
    <property type="evidence" value="ECO:0007669"/>
    <property type="project" value="UniProtKB-KW"/>
</dbReference>
<dbReference type="GO" id="GO:0005524">
    <property type="term" value="F:ATP binding"/>
    <property type="evidence" value="ECO:0007669"/>
    <property type="project" value="UniProtKB-UniRule"/>
</dbReference>
<dbReference type="GO" id="GO:0016887">
    <property type="term" value="F:ATP hydrolysis activity"/>
    <property type="evidence" value="ECO:0007669"/>
    <property type="project" value="InterPro"/>
</dbReference>
<dbReference type="GO" id="GO:0046933">
    <property type="term" value="F:proton-transporting ATP synthase activity, rotational mechanism"/>
    <property type="evidence" value="ECO:0007669"/>
    <property type="project" value="UniProtKB-UniRule"/>
</dbReference>
<dbReference type="CDD" id="cd18110">
    <property type="entry name" value="ATP-synt_F1_beta_C"/>
    <property type="match status" value="1"/>
</dbReference>
<dbReference type="CDD" id="cd18115">
    <property type="entry name" value="ATP-synt_F1_beta_N"/>
    <property type="match status" value="1"/>
</dbReference>
<dbReference type="CDD" id="cd01133">
    <property type="entry name" value="F1-ATPase_beta_CD"/>
    <property type="match status" value="1"/>
</dbReference>
<dbReference type="FunFam" id="1.10.1140.10:FF:000001">
    <property type="entry name" value="ATP synthase subunit beta"/>
    <property type="match status" value="1"/>
</dbReference>
<dbReference type="FunFam" id="2.40.10.170:FF:000005">
    <property type="entry name" value="ATP synthase subunit beta"/>
    <property type="match status" value="1"/>
</dbReference>
<dbReference type="FunFam" id="3.40.50.300:FF:000004">
    <property type="entry name" value="ATP synthase subunit beta"/>
    <property type="match status" value="1"/>
</dbReference>
<dbReference type="Gene3D" id="2.40.10.170">
    <property type="match status" value="1"/>
</dbReference>
<dbReference type="Gene3D" id="1.10.1140.10">
    <property type="entry name" value="Bovine Mitochondrial F1-atpase, Atp Synthase Beta Chain, Chain D, domain 3"/>
    <property type="match status" value="1"/>
</dbReference>
<dbReference type="Gene3D" id="3.40.50.300">
    <property type="entry name" value="P-loop containing nucleotide triphosphate hydrolases"/>
    <property type="match status" value="1"/>
</dbReference>
<dbReference type="HAMAP" id="MF_01347">
    <property type="entry name" value="ATP_synth_beta_bact"/>
    <property type="match status" value="1"/>
</dbReference>
<dbReference type="InterPro" id="IPR003593">
    <property type="entry name" value="AAA+_ATPase"/>
</dbReference>
<dbReference type="InterPro" id="IPR055190">
    <property type="entry name" value="ATP-synt_VA_C"/>
</dbReference>
<dbReference type="InterPro" id="IPR005722">
    <property type="entry name" value="ATP_synth_F1_bsu"/>
</dbReference>
<dbReference type="InterPro" id="IPR020003">
    <property type="entry name" value="ATPase_a/bsu_AS"/>
</dbReference>
<dbReference type="InterPro" id="IPR050053">
    <property type="entry name" value="ATPase_alpha/beta_chains"/>
</dbReference>
<dbReference type="InterPro" id="IPR004100">
    <property type="entry name" value="ATPase_F1/V1/A1_a/bsu_N"/>
</dbReference>
<dbReference type="InterPro" id="IPR036121">
    <property type="entry name" value="ATPase_F1/V1/A1_a/bsu_N_sf"/>
</dbReference>
<dbReference type="InterPro" id="IPR000194">
    <property type="entry name" value="ATPase_F1/V1/A1_a/bsu_nucl-bd"/>
</dbReference>
<dbReference type="InterPro" id="IPR024034">
    <property type="entry name" value="ATPase_F1/V1_b/a_C"/>
</dbReference>
<dbReference type="InterPro" id="IPR027417">
    <property type="entry name" value="P-loop_NTPase"/>
</dbReference>
<dbReference type="NCBIfam" id="TIGR01039">
    <property type="entry name" value="atpD"/>
    <property type="match status" value="1"/>
</dbReference>
<dbReference type="PANTHER" id="PTHR15184">
    <property type="entry name" value="ATP SYNTHASE"/>
    <property type="match status" value="1"/>
</dbReference>
<dbReference type="PANTHER" id="PTHR15184:SF71">
    <property type="entry name" value="ATP SYNTHASE SUBUNIT BETA, MITOCHONDRIAL"/>
    <property type="match status" value="1"/>
</dbReference>
<dbReference type="Pfam" id="PF00006">
    <property type="entry name" value="ATP-synt_ab"/>
    <property type="match status" value="1"/>
</dbReference>
<dbReference type="Pfam" id="PF02874">
    <property type="entry name" value="ATP-synt_ab_N"/>
    <property type="match status" value="1"/>
</dbReference>
<dbReference type="Pfam" id="PF22919">
    <property type="entry name" value="ATP-synt_VA_C"/>
    <property type="match status" value="1"/>
</dbReference>
<dbReference type="SMART" id="SM00382">
    <property type="entry name" value="AAA"/>
    <property type="match status" value="1"/>
</dbReference>
<dbReference type="SUPFAM" id="SSF47917">
    <property type="entry name" value="C-terminal domain of alpha and beta subunits of F1 ATP synthase"/>
    <property type="match status" value="1"/>
</dbReference>
<dbReference type="SUPFAM" id="SSF50615">
    <property type="entry name" value="N-terminal domain of alpha and beta subunits of F1 ATP synthase"/>
    <property type="match status" value="1"/>
</dbReference>
<dbReference type="SUPFAM" id="SSF52540">
    <property type="entry name" value="P-loop containing nucleoside triphosphate hydrolases"/>
    <property type="match status" value="1"/>
</dbReference>
<dbReference type="PROSITE" id="PS00152">
    <property type="entry name" value="ATPASE_ALPHA_BETA"/>
    <property type="match status" value="1"/>
</dbReference>
<organism>
    <name type="scientific">Streptococcus pneumoniae (strain Taiwan19F-14)</name>
    <dbReference type="NCBI Taxonomy" id="487213"/>
    <lineage>
        <taxon>Bacteria</taxon>
        <taxon>Bacillati</taxon>
        <taxon>Bacillota</taxon>
        <taxon>Bacilli</taxon>
        <taxon>Lactobacillales</taxon>
        <taxon>Streptococcaceae</taxon>
        <taxon>Streptococcus</taxon>
    </lineage>
</organism>
<reference key="1">
    <citation type="journal article" date="2010" name="Genome Biol.">
        <title>Structure and dynamics of the pan-genome of Streptococcus pneumoniae and closely related species.</title>
        <authorList>
            <person name="Donati C."/>
            <person name="Hiller N.L."/>
            <person name="Tettelin H."/>
            <person name="Muzzi A."/>
            <person name="Croucher N.J."/>
            <person name="Angiuoli S.V."/>
            <person name="Oggioni M."/>
            <person name="Dunning Hotopp J.C."/>
            <person name="Hu F.Z."/>
            <person name="Riley D.R."/>
            <person name="Covacci A."/>
            <person name="Mitchell T.J."/>
            <person name="Bentley S.D."/>
            <person name="Kilian M."/>
            <person name="Ehrlich G.D."/>
            <person name="Rappuoli R."/>
            <person name="Moxon E.R."/>
            <person name="Masignani V."/>
        </authorList>
    </citation>
    <scope>NUCLEOTIDE SEQUENCE [LARGE SCALE GENOMIC DNA]</scope>
    <source>
        <strain>Taiwan19F-14</strain>
    </source>
</reference>
<name>ATPB_STRZT</name>
<protein>
    <recommendedName>
        <fullName evidence="1">ATP synthase subunit beta</fullName>
        <ecNumber evidence="1">7.1.2.2</ecNumber>
    </recommendedName>
    <alternativeName>
        <fullName evidence="1">ATP synthase F1 sector subunit beta</fullName>
    </alternativeName>
    <alternativeName>
        <fullName evidence="1">F-ATPase subunit beta</fullName>
    </alternativeName>
</protein>
<gene>
    <name evidence="1" type="primary">atpD</name>
    <name type="ordered locus">SPT_1444</name>
</gene>
<feature type="chain" id="PRO_1000166610" description="ATP synthase subunit beta">
    <location>
        <begin position="1"/>
        <end position="468"/>
    </location>
</feature>
<feature type="binding site" evidence="1">
    <location>
        <begin position="155"/>
        <end position="162"/>
    </location>
    <ligand>
        <name>ATP</name>
        <dbReference type="ChEBI" id="CHEBI:30616"/>
    </ligand>
</feature>
<proteinExistence type="inferred from homology"/>
<sequence length="468" mass="50950">MSSGKIAQVIGPVVDVLFAAGEKLPEINNALVVYKNDERKTKIVLEVALELGDGMVRTISMESTDGLTRGMEVLDTGRPISVPVGKETLGRVFNVLGDTIDLEAPFTEDAERQPIHKKAPTFDELSTSSEILETGIKVIDLLAPYLKGGKVGLFGGAGVGKTVLIQELIHNIAQEHGGISVFTGVGERTREGNDLYWEMKESGVIEKTAMVFGQMNEPPGARMRVALTGLTIAEYFRDVEGQDVLLFIDNIFRFTQAGSEVSALLGRMPSAVGYQPTLATEMGQLQERITSTKKGSVTSIQAIYVPADDYTDPAPATAFAHLDSTTNLERKLVQLGIYPAVDPLASSSRALAPEIVGEEHYAVAAEVKRVLQRYHELQDIIAILGMDELSDEEKTLVARARRIQFFLSQNFNVAEQFTGQPGSYVPVAETVRGFKEILDGKYDHLPEDAFRGVGSIEDVIAKAEKMGF</sequence>